<keyword id="KW-0134">Cell wall</keyword>
<keyword id="KW-0325">Glycoprotein</keyword>
<keyword id="KW-0326">Glycosidase</keyword>
<keyword id="KW-0378">Hydrolase</keyword>
<keyword id="KW-0964">Secreted</keyword>
<keyword id="KW-0732">Signal</keyword>
<keyword id="KW-0865">Zymogen</keyword>
<organism>
    <name type="scientific">Daucus carota</name>
    <name type="common">Wild carrot</name>
    <dbReference type="NCBI Taxonomy" id="4039"/>
    <lineage>
        <taxon>Eukaryota</taxon>
        <taxon>Viridiplantae</taxon>
        <taxon>Streptophyta</taxon>
        <taxon>Embryophyta</taxon>
        <taxon>Tracheophyta</taxon>
        <taxon>Spermatophyta</taxon>
        <taxon>Magnoliopsida</taxon>
        <taxon>eudicotyledons</taxon>
        <taxon>Gunneridae</taxon>
        <taxon>Pentapetalae</taxon>
        <taxon>asterids</taxon>
        <taxon>campanulids</taxon>
        <taxon>Apiales</taxon>
        <taxon>Apiaceae</taxon>
        <taxon>Apioideae</taxon>
        <taxon>Scandiceae</taxon>
        <taxon>Daucinae</taxon>
        <taxon>Daucus</taxon>
        <taxon>Daucus sect. Daucus</taxon>
    </lineage>
</organism>
<comment type="function">
    <text>May play an important role in phloem unloading and in stress response.</text>
</comment>
<comment type="catalytic activity">
    <reaction evidence="2">
        <text>Hydrolysis of terminal non-reducing beta-D-fructofuranoside residues in beta-D-fructofuranosides.</text>
        <dbReference type="EC" id="3.2.1.26"/>
    </reaction>
</comment>
<comment type="subcellular location">
    <subcellularLocation>
        <location>Secreted</location>
        <location>Cell wall</location>
    </subcellularLocation>
    <text>Ionically bound to the cell wall.</text>
</comment>
<comment type="similarity">
    <text evidence="3">Belongs to the glycosyl hydrolase 32 family.</text>
</comment>
<accession>Q39692</accession>
<proteinExistence type="inferred from homology"/>
<evidence type="ECO:0000255" key="1"/>
<evidence type="ECO:0000255" key="2">
    <source>
        <dbReference type="PROSITE-ProRule" id="PRU10067"/>
    </source>
</evidence>
<evidence type="ECO:0000305" key="3"/>
<protein>
    <recommendedName>
        <fullName>Beta-fructofuranosidase, insoluble isoenzyme 2</fullName>
        <ecNumber>3.2.1.26</ecNumber>
    </recommendedName>
    <alternativeName>
        <fullName>Cell wall beta-fructosidase 2</fullName>
    </alternativeName>
    <alternativeName>
        <fullName>Invertase 2</fullName>
    </alternativeName>
    <alternativeName>
        <fullName>Sucrose hydrolase 2</fullName>
    </alternativeName>
</protein>
<reference key="1">
    <citation type="journal article" date="1995" name="Plant Mol. Biol.">
        <title>Structural organization and differential expression of carrot beta-fructofuranosidase genes: identification of a gene coding for a flower bud-specific isozyme.</title>
        <authorList>
            <person name="Lorenz K."/>
            <person name="Lienhard S."/>
            <person name="Sturm A."/>
        </authorList>
    </citation>
    <scope>NUCLEOTIDE SEQUENCE [GENOMIC DNA]</scope>
    <source>
        <strain>cv. Queen Anne's Lace</strain>
    </source>
</reference>
<name>INV2_DAUCA</name>
<dbReference type="EC" id="3.2.1.26"/>
<dbReference type="EMBL" id="X78424">
    <property type="protein sequence ID" value="CAA55189.1"/>
    <property type="molecule type" value="Genomic_DNA"/>
</dbReference>
<dbReference type="PIR" id="S56681">
    <property type="entry name" value="S56681"/>
</dbReference>
<dbReference type="SMR" id="Q39692"/>
<dbReference type="CAZy" id="GH32">
    <property type="family name" value="Glycoside Hydrolase Family 32"/>
</dbReference>
<dbReference type="GlyCosmos" id="Q39692">
    <property type="glycosylation" value="5 sites, No reported glycans"/>
</dbReference>
<dbReference type="GO" id="GO:0005576">
    <property type="term" value="C:extracellular region"/>
    <property type="evidence" value="ECO:0007669"/>
    <property type="project" value="UniProtKB-KW"/>
</dbReference>
<dbReference type="GO" id="GO:0004564">
    <property type="term" value="F:beta-fructofuranosidase activity"/>
    <property type="evidence" value="ECO:0007669"/>
    <property type="project" value="UniProtKB-EC"/>
</dbReference>
<dbReference type="GO" id="GO:0005975">
    <property type="term" value="P:carbohydrate metabolic process"/>
    <property type="evidence" value="ECO:0007669"/>
    <property type="project" value="InterPro"/>
</dbReference>
<dbReference type="CDD" id="cd18624">
    <property type="entry name" value="GH32_Fruct1-like"/>
    <property type="match status" value="1"/>
</dbReference>
<dbReference type="FunFam" id="2.115.10.20:FF:000001">
    <property type="entry name" value="Beta-fructofuranosidase, insoluble isoenzyme CWINV1"/>
    <property type="match status" value="1"/>
</dbReference>
<dbReference type="FunFam" id="2.60.120.560:FF:000002">
    <property type="entry name" value="Beta-fructofuranosidase, insoluble isoenzyme CWINV1"/>
    <property type="match status" value="1"/>
</dbReference>
<dbReference type="Gene3D" id="2.60.120.560">
    <property type="entry name" value="Exo-inulinase, domain 1"/>
    <property type="match status" value="1"/>
</dbReference>
<dbReference type="Gene3D" id="2.115.10.20">
    <property type="entry name" value="Glycosyl hydrolase domain, family 43"/>
    <property type="match status" value="1"/>
</dbReference>
<dbReference type="InterPro" id="IPR013320">
    <property type="entry name" value="ConA-like_dom_sf"/>
</dbReference>
<dbReference type="InterPro" id="IPR050551">
    <property type="entry name" value="Fructan_Metab_Enzymes"/>
</dbReference>
<dbReference type="InterPro" id="IPR001362">
    <property type="entry name" value="Glyco_hydro_32"/>
</dbReference>
<dbReference type="InterPro" id="IPR018053">
    <property type="entry name" value="Glyco_hydro_32_AS"/>
</dbReference>
<dbReference type="InterPro" id="IPR013189">
    <property type="entry name" value="Glyco_hydro_32_C"/>
</dbReference>
<dbReference type="InterPro" id="IPR013148">
    <property type="entry name" value="Glyco_hydro_32_N"/>
</dbReference>
<dbReference type="InterPro" id="IPR023296">
    <property type="entry name" value="Glyco_hydro_beta-prop_sf"/>
</dbReference>
<dbReference type="PANTHER" id="PTHR31953">
    <property type="entry name" value="BETA-FRUCTOFURANOSIDASE, INSOLUBLE ISOENZYME CWINV1-RELATED"/>
    <property type="match status" value="1"/>
</dbReference>
<dbReference type="Pfam" id="PF08244">
    <property type="entry name" value="Glyco_hydro_32C"/>
    <property type="match status" value="1"/>
</dbReference>
<dbReference type="Pfam" id="PF00251">
    <property type="entry name" value="Glyco_hydro_32N"/>
    <property type="match status" value="1"/>
</dbReference>
<dbReference type="SMART" id="SM00640">
    <property type="entry name" value="Glyco_32"/>
    <property type="match status" value="1"/>
</dbReference>
<dbReference type="SUPFAM" id="SSF75005">
    <property type="entry name" value="Arabinanase/levansucrase/invertase"/>
    <property type="match status" value="1"/>
</dbReference>
<dbReference type="SUPFAM" id="SSF49899">
    <property type="entry name" value="Concanavalin A-like lectins/glucanases"/>
    <property type="match status" value="1"/>
</dbReference>
<dbReference type="PROSITE" id="PS00609">
    <property type="entry name" value="GLYCOSYL_HYDROL_F32"/>
    <property type="match status" value="1"/>
</dbReference>
<sequence>MLIRCFHIKMALVTCFHSMLFLSAVVFIFSLDVNIRGVEASHQVFPELQSVSAVNVQLVHRTGYHFQPKKHWINDPNGPMYYKGFYHLFYQYNPKGAVWGNIVWAHSISKDLINWVALEPAIFPSKPFDKYGCWSGSATVLPGGKPVIMYTGIVTPSPVNTQVQNFAVPANYSDPYLREWIKPDNNPIVRARSENSSSFRDPTTAWFDGVHWKILVGSRRKHRGIAYLYRSRNFLKWTKAKHPLHSKDRTGMWECLDFYPVAPKGMNGLDTSVTGQDIKHVLKVSLYSTRYEYYTVGEYDRDNDIYVPDNTSVDGWAGLRYDYGNFYASKTFFDPDKQRRILWGWANESDSKQDDVQKGWAGIQLIPRKLWLDPNGKQLIQWPIEEIQLLRGQNVHMGSQVLNTGEHIEVKGVTAAQADVDATFSFKSLDRAEWFDPNWAKLDALDVCDWMGSTVRGGLGPFGFLTLASEKLEEYTPVFFRVFKTKDKLKVLMCSDAKRSSTTAEGLYKPPFAGYVDVDLSDKKISLRSLIDNSVVESFGAHGRTCITSRVYPKIAIYNNAHVFVFNNGTEAITIDSLDAWSMKAPSLMNNN</sequence>
<gene>
    <name type="primary">INV2</name>
</gene>
<feature type="signal peptide" evidence="1">
    <location>
        <begin position="1"/>
        <end position="40"/>
    </location>
</feature>
<feature type="propeptide" id="PRO_0000033368" evidence="1">
    <location>
        <begin position="41"/>
        <end status="unknown"/>
    </location>
</feature>
<feature type="chain" id="PRO_0000033369" description="Beta-fructofuranosidase, insoluble isoenzyme 2">
    <location>
        <begin status="unknown"/>
        <end position="592"/>
    </location>
</feature>
<feature type="active site" evidence="2">
    <location>
        <position position="75"/>
    </location>
</feature>
<feature type="glycosylation site" description="N-linked (GlcNAc...) asparagine" evidence="1">
    <location>
        <position position="171"/>
    </location>
</feature>
<feature type="glycosylation site" description="N-linked (GlcNAc...) asparagine" evidence="1">
    <location>
        <position position="195"/>
    </location>
</feature>
<feature type="glycosylation site" description="N-linked (GlcNAc...) asparagine" evidence="1">
    <location>
        <position position="310"/>
    </location>
</feature>
<feature type="glycosylation site" description="N-linked (GlcNAc...) asparagine" evidence="1">
    <location>
        <position position="347"/>
    </location>
</feature>
<feature type="glycosylation site" description="N-linked (GlcNAc...) asparagine" evidence="1">
    <location>
        <position position="568"/>
    </location>
</feature>